<organism>
    <name type="scientific">Staphylococcus aureus (strain N315)</name>
    <dbReference type="NCBI Taxonomy" id="158879"/>
    <lineage>
        <taxon>Bacteria</taxon>
        <taxon>Bacillati</taxon>
        <taxon>Bacillota</taxon>
        <taxon>Bacilli</taxon>
        <taxon>Bacillales</taxon>
        <taxon>Staphylococcaceae</taxon>
        <taxon>Staphylococcus</taxon>
    </lineage>
</organism>
<sequence>MAIKKLVPASHPILTKKAQAVKTFDDSLKRLLQDLEDTMYAQEAAGLCAPQINQSLQVAIIDMEMEGLLQLVNPKIISQSNETITDLEGSITLPDVYGEVTRSKMIVVESYDVNGNKVELTAHEDVARMILHIIDQMNGIPFTERADRILTDKEVEAYFIND</sequence>
<reference key="1">
    <citation type="journal article" date="2001" name="Lancet">
        <title>Whole genome sequencing of meticillin-resistant Staphylococcus aureus.</title>
        <authorList>
            <person name="Kuroda M."/>
            <person name="Ohta T."/>
            <person name="Uchiyama I."/>
            <person name="Baba T."/>
            <person name="Yuzawa H."/>
            <person name="Kobayashi I."/>
            <person name="Cui L."/>
            <person name="Oguchi A."/>
            <person name="Aoki K."/>
            <person name="Nagai Y."/>
            <person name="Lian J.-Q."/>
            <person name="Ito T."/>
            <person name="Kanamori M."/>
            <person name="Matsumaru H."/>
            <person name="Maruyama A."/>
            <person name="Murakami H."/>
            <person name="Hosoyama A."/>
            <person name="Mizutani-Ui Y."/>
            <person name="Takahashi N.K."/>
            <person name="Sawano T."/>
            <person name="Inoue R."/>
            <person name="Kaito C."/>
            <person name="Sekimizu K."/>
            <person name="Hirakawa H."/>
            <person name="Kuhara S."/>
            <person name="Goto S."/>
            <person name="Yabuzaki J."/>
            <person name="Kanehisa M."/>
            <person name="Yamashita A."/>
            <person name="Oshima K."/>
            <person name="Furuya K."/>
            <person name="Yoshino C."/>
            <person name="Shiba T."/>
            <person name="Hattori M."/>
            <person name="Ogasawara N."/>
            <person name="Hayashi H."/>
            <person name="Hiramatsu K."/>
        </authorList>
    </citation>
    <scope>NUCLEOTIDE SEQUENCE [LARGE SCALE GENOMIC DNA]</scope>
    <source>
        <strain>N315</strain>
    </source>
</reference>
<proteinExistence type="inferred from homology"/>
<comment type="similarity">
    <text evidence="1">Belongs to the polypeptide deformylase family.</text>
</comment>
<gene>
    <name type="ordered locus">SA1058</name>
</gene>
<name>DEFL_STAAN</name>
<accession>P63922</accession>
<accession>Q99UQ3</accession>
<feature type="chain" id="PRO_0000082898" description="Peptide deformylase-like">
    <location>
        <begin position="1"/>
        <end position="162"/>
    </location>
</feature>
<protein>
    <recommendedName>
        <fullName evidence="1">Peptide deformylase-like</fullName>
    </recommendedName>
    <alternativeName>
        <fullName evidence="1">Polypeptide deformylase-like</fullName>
    </alternativeName>
</protein>
<evidence type="ECO:0000255" key="1">
    <source>
        <dbReference type="HAMAP-Rule" id="MF_00163"/>
    </source>
</evidence>
<dbReference type="EMBL" id="BA000018">
    <property type="protein sequence ID" value="BAB42310.1"/>
    <property type="molecule type" value="Genomic_DNA"/>
</dbReference>
<dbReference type="PIR" id="B89894">
    <property type="entry name" value="B89894"/>
</dbReference>
<dbReference type="RefSeq" id="WP_000985293.1">
    <property type="nucleotide sequence ID" value="NC_002745.2"/>
</dbReference>
<dbReference type="SMR" id="P63922"/>
<dbReference type="EnsemblBacteria" id="BAB42310">
    <property type="protein sequence ID" value="BAB42310"/>
    <property type="gene ID" value="BAB42310"/>
</dbReference>
<dbReference type="KEGG" id="sau:SA1058"/>
<dbReference type="HOGENOM" id="CLU_061901_4_1_9"/>
<dbReference type="GO" id="GO:0042586">
    <property type="term" value="F:peptide deformylase activity"/>
    <property type="evidence" value="ECO:0007669"/>
    <property type="project" value="UniProtKB-UniRule"/>
</dbReference>
<dbReference type="GO" id="GO:0043686">
    <property type="term" value="P:co-translational protein modification"/>
    <property type="evidence" value="ECO:0007669"/>
    <property type="project" value="TreeGrafter"/>
</dbReference>
<dbReference type="GO" id="GO:0006412">
    <property type="term" value="P:translation"/>
    <property type="evidence" value="ECO:0007669"/>
    <property type="project" value="UniProtKB-UniRule"/>
</dbReference>
<dbReference type="CDD" id="cd00487">
    <property type="entry name" value="Pep_deformylase"/>
    <property type="match status" value="1"/>
</dbReference>
<dbReference type="FunFam" id="3.90.45.10:FF:000010">
    <property type="entry name" value="Peptide deformylase"/>
    <property type="match status" value="1"/>
</dbReference>
<dbReference type="Gene3D" id="3.90.45.10">
    <property type="entry name" value="Peptide deformylase"/>
    <property type="match status" value="1"/>
</dbReference>
<dbReference type="HAMAP" id="MF_00163">
    <property type="entry name" value="Pep_deformylase"/>
    <property type="match status" value="1"/>
</dbReference>
<dbReference type="InterPro" id="IPR023635">
    <property type="entry name" value="Peptide_deformylase"/>
</dbReference>
<dbReference type="InterPro" id="IPR036821">
    <property type="entry name" value="Peptide_deformylase_sf"/>
</dbReference>
<dbReference type="NCBIfam" id="TIGR00079">
    <property type="entry name" value="pept_deformyl"/>
    <property type="match status" value="1"/>
</dbReference>
<dbReference type="NCBIfam" id="NF011189">
    <property type="entry name" value="PRK14595.1"/>
    <property type="match status" value="1"/>
</dbReference>
<dbReference type="PANTHER" id="PTHR10458">
    <property type="entry name" value="PEPTIDE DEFORMYLASE"/>
    <property type="match status" value="1"/>
</dbReference>
<dbReference type="PANTHER" id="PTHR10458:SF22">
    <property type="entry name" value="PEPTIDE DEFORMYLASE"/>
    <property type="match status" value="1"/>
</dbReference>
<dbReference type="Pfam" id="PF01327">
    <property type="entry name" value="Pep_deformylase"/>
    <property type="match status" value="1"/>
</dbReference>
<dbReference type="PIRSF" id="PIRSF004749">
    <property type="entry name" value="Pep_def"/>
    <property type="match status" value="1"/>
</dbReference>
<dbReference type="PRINTS" id="PR01576">
    <property type="entry name" value="PDEFORMYLASE"/>
</dbReference>
<dbReference type="SUPFAM" id="SSF56420">
    <property type="entry name" value="Peptide deformylase"/>
    <property type="match status" value="1"/>
</dbReference>